<protein>
    <recommendedName>
        <fullName>Uncharacterized protein YibT</fullName>
    </recommendedName>
</protein>
<name>YIBT_SALPA</name>
<accession>Q5PLR2</accession>
<sequence>MAKIGENVPLLIDKAVDFMASSQAFREYLNKTPPRDYVPSEVPSESAPIYLQRLEYYRRLYRPKEEERG</sequence>
<dbReference type="EMBL" id="CP000026">
    <property type="protein sequence ID" value="AAV79342.1"/>
    <property type="molecule type" value="Genomic_DNA"/>
</dbReference>
<dbReference type="RefSeq" id="WP_001062558.1">
    <property type="nucleotide sequence ID" value="NC_006511.1"/>
</dbReference>
<dbReference type="SMR" id="Q5PLR2"/>
<dbReference type="KEGG" id="spt:SPA3540"/>
<dbReference type="HOGENOM" id="CLU_185147_0_0_6"/>
<dbReference type="Proteomes" id="UP000008185">
    <property type="component" value="Chromosome"/>
</dbReference>
<dbReference type="GO" id="GO:0003677">
    <property type="term" value="F:DNA binding"/>
    <property type="evidence" value="ECO:0007669"/>
    <property type="project" value="InterPro"/>
</dbReference>
<dbReference type="GO" id="GO:0003887">
    <property type="term" value="F:DNA-directed DNA polymerase activity"/>
    <property type="evidence" value="ECO:0007669"/>
    <property type="project" value="InterPro"/>
</dbReference>
<dbReference type="GO" id="GO:0006260">
    <property type="term" value="P:DNA replication"/>
    <property type="evidence" value="ECO:0007669"/>
    <property type="project" value="InterPro"/>
</dbReference>
<dbReference type="Gene3D" id="1.20.58.250">
    <property type="entry name" value="DNA polymerase III-theta"/>
    <property type="match status" value="1"/>
</dbReference>
<dbReference type="InterPro" id="IPR036745">
    <property type="entry name" value="PolIII_theta_sf"/>
</dbReference>
<dbReference type="SUPFAM" id="SSF46575">
    <property type="entry name" value="DNA polymerase III theta subunit-like"/>
    <property type="match status" value="1"/>
</dbReference>
<proteinExistence type="predicted"/>
<feature type="chain" id="PRO_0000263018" description="Uncharacterized protein YibT">
    <location>
        <begin position="1"/>
        <end position="69"/>
    </location>
</feature>
<gene>
    <name type="primary">yibT</name>
    <name type="ordered locus">SPA3540</name>
</gene>
<organism>
    <name type="scientific">Salmonella paratyphi A (strain ATCC 9150 / SARB42)</name>
    <dbReference type="NCBI Taxonomy" id="295319"/>
    <lineage>
        <taxon>Bacteria</taxon>
        <taxon>Pseudomonadati</taxon>
        <taxon>Pseudomonadota</taxon>
        <taxon>Gammaproteobacteria</taxon>
        <taxon>Enterobacterales</taxon>
        <taxon>Enterobacteriaceae</taxon>
        <taxon>Salmonella</taxon>
    </lineage>
</organism>
<reference key="1">
    <citation type="journal article" date="2004" name="Nat. Genet.">
        <title>Comparison of genome degradation in Paratyphi A and Typhi, human-restricted serovars of Salmonella enterica that cause typhoid.</title>
        <authorList>
            <person name="McClelland M."/>
            <person name="Sanderson K.E."/>
            <person name="Clifton S.W."/>
            <person name="Latreille P."/>
            <person name="Porwollik S."/>
            <person name="Sabo A."/>
            <person name="Meyer R."/>
            <person name="Bieri T."/>
            <person name="Ozersky P."/>
            <person name="McLellan M."/>
            <person name="Harkins C.R."/>
            <person name="Wang C."/>
            <person name="Nguyen C."/>
            <person name="Berghoff A."/>
            <person name="Elliott G."/>
            <person name="Kohlberg S."/>
            <person name="Strong C."/>
            <person name="Du F."/>
            <person name="Carter J."/>
            <person name="Kremizki C."/>
            <person name="Layman D."/>
            <person name="Leonard S."/>
            <person name="Sun H."/>
            <person name="Fulton L."/>
            <person name="Nash W."/>
            <person name="Miner T."/>
            <person name="Minx P."/>
            <person name="Delehaunty K."/>
            <person name="Fronick C."/>
            <person name="Magrini V."/>
            <person name="Nhan M."/>
            <person name="Warren W."/>
            <person name="Florea L."/>
            <person name="Spieth J."/>
            <person name="Wilson R.K."/>
        </authorList>
    </citation>
    <scope>NUCLEOTIDE SEQUENCE [LARGE SCALE GENOMIC DNA]</scope>
    <source>
        <strain>ATCC 9150 / SARB42</strain>
    </source>
</reference>